<protein>
    <recommendedName>
        <fullName evidence="1">Aspartate 1-decarboxylase</fullName>
        <ecNumber evidence="1">4.1.1.11</ecNumber>
    </recommendedName>
    <alternativeName>
        <fullName evidence="1">Aspartate alpha-decarboxylase</fullName>
    </alternativeName>
    <component>
        <recommendedName>
            <fullName evidence="1">Aspartate 1-decarboxylase beta chain</fullName>
        </recommendedName>
    </component>
    <component>
        <recommendedName>
            <fullName evidence="1">Aspartate 1-decarboxylase alpha chain</fullName>
        </recommendedName>
    </component>
</protein>
<proteinExistence type="inferred from homology"/>
<reference key="1">
    <citation type="journal article" date="2008" name="Environ. Microbiol.">
        <title>The complete genome sequence of Moorella thermoacetica (f. Clostridium thermoaceticum).</title>
        <authorList>
            <person name="Pierce E."/>
            <person name="Xie G."/>
            <person name="Barabote R.D."/>
            <person name="Saunders E."/>
            <person name="Han C.S."/>
            <person name="Detter J.C."/>
            <person name="Richardson P."/>
            <person name="Brettin T.S."/>
            <person name="Das A."/>
            <person name="Ljungdahl L.G."/>
            <person name="Ragsdale S.W."/>
        </authorList>
    </citation>
    <scope>NUCLEOTIDE SEQUENCE [LARGE SCALE GENOMIC DNA]</scope>
    <source>
        <strain>ATCC 39073 / JCM 9320</strain>
    </source>
</reference>
<dbReference type="EC" id="4.1.1.11" evidence="1"/>
<dbReference type="EMBL" id="CP000232">
    <property type="protein sequence ID" value="ABC18480.1"/>
    <property type="molecule type" value="Genomic_DNA"/>
</dbReference>
<dbReference type="RefSeq" id="YP_429023.1">
    <property type="nucleotide sequence ID" value="NC_007644.1"/>
</dbReference>
<dbReference type="SMR" id="Q2RM59"/>
<dbReference type="STRING" id="264732.Moth_0142"/>
<dbReference type="EnsemblBacteria" id="ABC18480">
    <property type="protein sequence ID" value="ABC18480"/>
    <property type="gene ID" value="Moth_0142"/>
</dbReference>
<dbReference type="KEGG" id="mta:Moth_0142"/>
<dbReference type="PATRIC" id="fig|264732.11.peg.149"/>
<dbReference type="eggNOG" id="COG0853">
    <property type="taxonomic scope" value="Bacteria"/>
</dbReference>
<dbReference type="HOGENOM" id="CLU_115305_2_0_9"/>
<dbReference type="OrthoDB" id="9803983at2"/>
<dbReference type="BRENDA" id="4.1.1.11">
    <property type="organism ID" value="1528"/>
</dbReference>
<dbReference type="UniPathway" id="UPA00028">
    <property type="reaction ID" value="UER00002"/>
</dbReference>
<dbReference type="GO" id="GO:0005829">
    <property type="term" value="C:cytosol"/>
    <property type="evidence" value="ECO:0007669"/>
    <property type="project" value="TreeGrafter"/>
</dbReference>
<dbReference type="GO" id="GO:0004068">
    <property type="term" value="F:aspartate 1-decarboxylase activity"/>
    <property type="evidence" value="ECO:0007669"/>
    <property type="project" value="UniProtKB-UniRule"/>
</dbReference>
<dbReference type="GO" id="GO:0006523">
    <property type="term" value="P:alanine biosynthetic process"/>
    <property type="evidence" value="ECO:0007669"/>
    <property type="project" value="InterPro"/>
</dbReference>
<dbReference type="GO" id="GO:0015940">
    <property type="term" value="P:pantothenate biosynthetic process"/>
    <property type="evidence" value="ECO:0007669"/>
    <property type="project" value="UniProtKB-UniRule"/>
</dbReference>
<dbReference type="CDD" id="cd06919">
    <property type="entry name" value="Asp_decarbox"/>
    <property type="match status" value="1"/>
</dbReference>
<dbReference type="Gene3D" id="2.40.40.20">
    <property type="match status" value="1"/>
</dbReference>
<dbReference type="HAMAP" id="MF_00446">
    <property type="entry name" value="PanD"/>
    <property type="match status" value="1"/>
</dbReference>
<dbReference type="InterPro" id="IPR009010">
    <property type="entry name" value="Asp_de-COase-like_dom_sf"/>
</dbReference>
<dbReference type="InterPro" id="IPR003190">
    <property type="entry name" value="Asp_decarbox"/>
</dbReference>
<dbReference type="NCBIfam" id="TIGR00223">
    <property type="entry name" value="panD"/>
    <property type="match status" value="1"/>
</dbReference>
<dbReference type="PANTHER" id="PTHR21012">
    <property type="entry name" value="ASPARTATE 1-DECARBOXYLASE"/>
    <property type="match status" value="1"/>
</dbReference>
<dbReference type="PANTHER" id="PTHR21012:SF0">
    <property type="entry name" value="ASPARTATE 1-DECARBOXYLASE"/>
    <property type="match status" value="1"/>
</dbReference>
<dbReference type="Pfam" id="PF02261">
    <property type="entry name" value="Asp_decarbox"/>
    <property type="match status" value="1"/>
</dbReference>
<dbReference type="PIRSF" id="PIRSF006246">
    <property type="entry name" value="Asp_decarbox"/>
    <property type="match status" value="1"/>
</dbReference>
<dbReference type="SUPFAM" id="SSF50692">
    <property type="entry name" value="ADC-like"/>
    <property type="match status" value="1"/>
</dbReference>
<organism>
    <name type="scientific">Moorella thermoacetica (strain ATCC 39073 / JCM 9320)</name>
    <dbReference type="NCBI Taxonomy" id="264732"/>
    <lineage>
        <taxon>Bacteria</taxon>
        <taxon>Bacillati</taxon>
        <taxon>Bacillota</taxon>
        <taxon>Clostridia</taxon>
        <taxon>Moorellales</taxon>
        <taxon>Moorellaceae</taxon>
        <taxon>Moorella</taxon>
    </lineage>
</organism>
<keyword id="KW-0068">Autocatalytic cleavage</keyword>
<keyword id="KW-0963">Cytoplasm</keyword>
<keyword id="KW-0210">Decarboxylase</keyword>
<keyword id="KW-0456">Lyase</keyword>
<keyword id="KW-0566">Pantothenate biosynthesis</keyword>
<keyword id="KW-0670">Pyruvate</keyword>
<keyword id="KW-0704">Schiff base</keyword>
<keyword id="KW-0865">Zymogen</keyword>
<sequence>MWRIMMKSKLHRATVTAADLNYIGSITIDSDLMAAADILPNEKVQVVDNNNGARLETYAIPGPAGSGVICANGAAARLVQPGDIIIIIAYGIFDDREARTYQPRVIFLDARNKITAVKKGEQPGQVWV</sequence>
<accession>Q2RM59</accession>
<comment type="function">
    <text evidence="1">Catalyzes the pyruvoyl-dependent decarboxylation of aspartate to produce beta-alanine.</text>
</comment>
<comment type="catalytic activity">
    <reaction evidence="1">
        <text>L-aspartate + H(+) = beta-alanine + CO2</text>
        <dbReference type="Rhea" id="RHEA:19497"/>
        <dbReference type="ChEBI" id="CHEBI:15378"/>
        <dbReference type="ChEBI" id="CHEBI:16526"/>
        <dbReference type="ChEBI" id="CHEBI:29991"/>
        <dbReference type="ChEBI" id="CHEBI:57966"/>
        <dbReference type="EC" id="4.1.1.11"/>
    </reaction>
</comment>
<comment type="cofactor">
    <cofactor evidence="1">
        <name>pyruvate</name>
        <dbReference type="ChEBI" id="CHEBI:15361"/>
    </cofactor>
    <text evidence="1">Binds 1 pyruvoyl group covalently per subunit.</text>
</comment>
<comment type="pathway">
    <text evidence="1">Cofactor biosynthesis; (R)-pantothenate biosynthesis; beta-alanine from L-aspartate: step 1/1.</text>
</comment>
<comment type="subunit">
    <text evidence="1">Heterooctamer of four alpha and four beta subunits.</text>
</comment>
<comment type="subcellular location">
    <subcellularLocation>
        <location evidence="1">Cytoplasm</location>
    </subcellularLocation>
</comment>
<comment type="PTM">
    <text evidence="1">Is synthesized initially as an inactive proenzyme, which is activated by self-cleavage at a specific serine bond to produce a beta-subunit with a hydroxyl group at its C-terminus and an alpha-subunit with a pyruvoyl group at its N-terminus.</text>
</comment>
<comment type="similarity">
    <text evidence="1">Belongs to the PanD family.</text>
</comment>
<gene>
    <name evidence="1" type="primary">panD</name>
    <name type="ordered locus">Moth_0142</name>
</gene>
<feature type="chain" id="PRO_0000236875" description="Aspartate 1-decarboxylase beta chain" evidence="1">
    <location>
        <begin position="1"/>
        <end position="24"/>
    </location>
</feature>
<feature type="chain" id="PRO_0000236876" description="Aspartate 1-decarboxylase alpha chain" evidence="1">
    <location>
        <begin position="25"/>
        <end position="128"/>
    </location>
</feature>
<feature type="active site" description="Schiff-base intermediate with substrate; via pyruvic acid" evidence="1">
    <location>
        <position position="25"/>
    </location>
</feature>
<feature type="active site" description="Proton donor" evidence="1">
    <location>
        <position position="58"/>
    </location>
</feature>
<feature type="binding site" evidence="1">
    <location>
        <position position="57"/>
    </location>
    <ligand>
        <name>substrate</name>
    </ligand>
</feature>
<feature type="binding site" evidence="1">
    <location>
        <begin position="73"/>
        <end position="75"/>
    </location>
    <ligand>
        <name>substrate</name>
    </ligand>
</feature>
<feature type="modified residue" description="Pyruvic acid (Ser)" evidence="1">
    <location>
        <position position="25"/>
    </location>
</feature>
<evidence type="ECO:0000255" key="1">
    <source>
        <dbReference type="HAMAP-Rule" id="MF_00446"/>
    </source>
</evidence>
<name>PAND_MOOTA</name>